<evidence type="ECO:0000256" key="1">
    <source>
        <dbReference type="SAM" id="MobiDB-lite"/>
    </source>
</evidence>
<evidence type="ECO:0000305" key="2"/>
<protein>
    <recommendedName>
        <fullName>G2/mitotic-specific cyclin-B2</fullName>
    </recommendedName>
</protein>
<gene>
    <name type="primary">CCNB2</name>
    <name type="synonym">CYCB2</name>
</gene>
<proteinExistence type="evidence at transcript level"/>
<comment type="function">
    <text>Essential for the control of the cell cycle at the G2/M (mitosis) transition.</text>
</comment>
<comment type="subunit">
    <text>Interacts with the CDK1 protein kinase to form a serine/threonine kinase holoenzyme complex also known as maturation promoting factor (MPF). The cyclin subunit imparts substrate specificity to the complex.</text>
</comment>
<comment type="developmental stage">
    <text>Accumulates steadily during G2 and is abruptly destroyed at mitosis.</text>
</comment>
<comment type="similarity">
    <text evidence="2">Belongs to the cyclin family. Cyclin AB subfamily.</text>
</comment>
<sequence length="399" mass="44652">MALTRRAAVMRGVENAVTGHNTKAKVQVTGKRAVLEEIGNKVARGSNVPKKTDCIKPPVKATKGPGKMTNTVVPPKPPAAVNQAVKDTTTASKVLSPVPMDVSMQEEDLCQAFSDVLLHNIEDIDADDSGNPQLCSDYVKDIYLYLRQLELQQSVRPHYLDGKTINGRMRAILVDWLVQVHSRFQLLQETLYMCVAVMDRFLQSHPVPRKRLQLVGVTALLLASKYEEMYSPDIADFVYITDNAYNSAEVREMEITILKELNFDLGRPLPLHFLRRASKAGEADAEQHTLAKYLMELTLIDYDMVHYHPSEIAAAALCLSQKVLGHDKWGTKQQYYTGYAEDSLAMTMKHMAKNVVKVNENLTKYTAVRNKYASSKLLRISTISQLNSKTIKDLAASLL</sequence>
<organism>
    <name type="scientific">Gallus gallus</name>
    <name type="common">Chicken</name>
    <dbReference type="NCBI Taxonomy" id="9031"/>
    <lineage>
        <taxon>Eukaryota</taxon>
        <taxon>Metazoa</taxon>
        <taxon>Chordata</taxon>
        <taxon>Craniata</taxon>
        <taxon>Vertebrata</taxon>
        <taxon>Euteleostomi</taxon>
        <taxon>Archelosauria</taxon>
        <taxon>Archosauria</taxon>
        <taxon>Dinosauria</taxon>
        <taxon>Saurischia</taxon>
        <taxon>Theropoda</taxon>
        <taxon>Coelurosauria</taxon>
        <taxon>Aves</taxon>
        <taxon>Neognathae</taxon>
        <taxon>Galloanserae</taxon>
        <taxon>Galliformes</taxon>
        <taxon>Phasianidae</taxon>
        <taxon>Phasianinae</taxon>
        <taxon>Gallus</taxon>
    </lineage>
</organism>
<dbReference type="EMBL" id="X62531">
    <property type="protein sequence ID" value="CAA44392.1"/>
    <property type="molecule type" value="mRNA"/>
</dbReference>
<dbReference type="PIR" id="S23596">
    <property type="entry name" value="S23596"/>
</dbReference>
<dbReference type="RefSeq" id="NP_001004369.1">
    <property type="nucleotide sequence ID" value="NM_001004369.1"/>
</dbReference>
<dbReference type="SMR" id="P29332"/>
<dbReference type="BioGRID" id="677060">
    <property type="interactions" value="1"/>
</dbReference>
<dbReference type="FunCoup" id="P29332">
    <property type="interactions" value="1644"/>
</dbReference>
<dbReference type="STRING" id="9031.ENSGALP00000006605"/>
<dbReference type="PaxDb" id="9031-ENSGALP00000006605"/>
<dbReference type="Ensembl" id="ENSGALT00010055721.1">
    <property type="protein sequence ID" value="ENSGALP00010033743.1"/>
    <property type="gene ID" value="ENSGALG00010022881.1"/>
</dbReference>
<dbReference type="GeneID" id="415400"/>
<dbReference type="KEGG" id="gga:415400"/>
<dbReference type="CTD" id="891"/>
<dbReference type="VEuPathDB" id="HostDB:geneid_415400"/>
<dbReference type="eggNOG" id="KOG0653">
    <property type="taxonomic scope" value="Eukaryota"/>
</dbReference>
<dbReference type="GeneTree" id="ENSGT00940000155405"/>
<dbReference type="HOGENOM" id="CLU_020695_2_1_1"/>
<dbReference type="InParanoid" id="P29332"/>
<dbReference type="OrthoDB" id="5590282at2759"/>
<dbReference type="PhylomeDB" id="P29332"/>
<dbReference type="TreeFam" id="TF101001"/>
<dbReference type="Reactome" id="R-GGA-2500257">
    <property type="pathway name" value="Resolution of Sister Chromatid Cohesion"/>
</dbReference>
<dbReference type="Reactome" id="R-GGA-2565942">
    <property type="pathway name" value="Regulation of PLK1 Activity at G2/M Transition"/>
</dbReference>
<dbReference type="Reactome" id="R-GGA-2980767">
    <property type="pathway name" value="Activation of NIMA Kinases NEK9, NEK6, NEK7"/>
</dbReference>
<dbReference type="Reactome" id="R-GGA-2995383">
    <property type="pathway name" value="Initiation of Nuclear Envelope (NE) Reformation"/>
</dbReference>
<dbReference type="Reactome" id="R-GGA-3301854">
    <property type="pathway name" value="Nuclear Pore Complex (NPC) Disassembly"/>
</dbReference>
<dbReference type="Reactome" id="R-GGA-69273">
    <property type="pathway name" value="Cyclin A/B1/B2 associated events during G2/M transition"/>
</dbReference>
<dbReference type="PRO" id="PR:P29332"/>
<dbReference type="Proteomes" id="UP000000539">
    <property type="component" value="Chromosome 10"/>
</dbReference>
<dbReference type="Bgee" id="ENSGALG00000004161">
    <property type="expression patterns" value="Expressed in spermatid and 14 other cell types or tissues"/>
</dbReference>
<dbReference type="GO" id="GO:0005813">
    <property type="term" value="C:centrosome"/>
    <property type="evidence" value="ECO:0007669"/>
    <property type="project" value="Ensembl"/>
</dbReference>
<dbReference type="GO" id="GO:0000307">
    <property type="term" value="C:cyclin-dependent protein kinase holoenzyme complex"/>
    <property type="evidence" value="ECO:0000318"/>
    <property type="project" value="GO_Central"/>
</dbReference>
<dbReference type="GO" id="GO:0005737">
    <property type="term" value="C:cytoplasm"/>
    <property type="evidence" value="ECO:0000318"/>
    <property type="project" value="GO_Central"/>
</dbReference>
<dbReference type="GO" id="GO:0005829">
    <property type="term" value="C:cytosol"/>
    <property type="evidence" value="ECO:0007669"/>
    <property type="project" value="Ensembl"/>
</dbReference>
<dbReference type="GO" id="GO:0016020">
    <property type="term" value="C:membrane"/>
    <property type="evidence" value="ECO:0007669"/>
    <property type="project" value="Ensembl"/>
</dbReference>
<dbReference type="GO" id="GO:0005815">
    <property type="term" value="C:microtubule organizing center"/>
    <property type="evidence" value="ECO:0000318"/>
    <property type="project" value="GO_Central"/>
</dbReference>
<dbReference type="GO" id="GO:0005634">
    <property type="term" value="C:nucleus"/>
    <property type="evidence" value="ECO:0000318"/>
    <property type="project" value="GO_Central"/>
</dbReference>
<dbReference type="GO" id="GO:0016538">
    <property type="term" value="F:cyclin-dependent protein serine/threonine kinase regulator activity"/>
    <property type="evidence" value="ECO:0000318"/>
    <property type="project" value="GO_Central"/>
</dbReference>
<dbReference type="GO" id="GO:0060317">
    <property type="term" value="P:cardiac epithelial to mesenchymal transition"/>
    <property type="evidence" value="ECO:0000315"/>
    <property type="project" value="AgBase"/>
</dbReference>
<dbReference type="GO" id="GO:0051301">
    <property type="term" value="P:cell division"/>
    <property type="evidence" value="ECO:0007669"/>
    <property type="project" value="UniProtKB-KW"/>
</dbReference>
<dbReference type="GO" id="GO:0000082">
    <property type="term" value="P:G1/S transition of mitotic cell cycle"/>
    <property type="evidence" value="ECO:0000318"/>
    <property type="project" value="GO_Central"/>
</dbReference>
<dbReference type="GO" id="GO:0008315">
    <property type="term" value="P:G2/MI transition of meiotic cell cycle"/>
    <property type="evidence" value="ECO:0007669"/>
    <property type="project" value="Ensembl"/>
</dbReference>
<dbReference type="GO" id="GO:0040008">
    <property type="term" value="P:regulation of growth"/>
    <property type="evidence" value="ECO:0007669"/>
    <property type="project" value="Ensembl"/>
</dbReference>
<dbReference type="GO" id="GO:0007057">
    <property type="term" value="P:spindle assembly involved in female meiosis I"/>
    <property type="evidence" value="ECO:0007669"/>
    <property type="project" value="Ensembl"/>
</dbReference>
<dbReference type="GO" id="GO:0043029">
    <property type="term" value="P:T cell homeostasis"/>
    <property type="evidence" value="ECO:0007669"/>
    <property type="project" value="Ensembl"/>
</dbReference>
<dbReference type="GO" id="GO:0048538">
    <property type="term" value="P:thymus development"/>
    <property type="evidence" value="ECO:0007669"/>
    <property type="project" value="Ensembl"/>
</dbReference>
<dbReference type="CDD" id="cd20566">
    <property type="entry name" value="CYCLIN_CCNB2_rpt1"/>
    <property type="match status" value="1"/>
</dbReference>
<dbReference type="CDD" id="cd20570">
    <property type="entry name" value="CYCLIN_CCNB2_rpt2"/>
    <property type="match status" value="1"/>
</dbReference>
<dbReference type="FunFam" id="1.10.472.10:FF:000027">
    <property type="entry name" value="G2/mitotic-specific cyclin-B1"/>
    <property type="match status" value="1"/>
</dbReference>
<dbReference type="Gene3D" id="1.10.472.10">
    <property type="entry name" value="Cyclin-like"/>
    <property type="match status" value="2"/>
</dbReference>
<dbReference type="InterPro" id="IPR039361">
    <property type="entry name" value="Cyclin"/>
</dbReference>
<dbReference type="InterPro" id="IPR013763">
    <property type="entry name" value="Cyclin-like_dom"/>
</dbReference>
<dbReference type="InterPro" id="IPR036915">
    <property type="entry name" value="Cyclin-like_sf"/>
</dbReference>
<dbReference type="InterPro" id="IPR046965">
    <property type="entry name" value="Cyclin_A/B-like"/>
</dbReference>
<dbReference type="InterPro" id="IPR004367">
    <property type="entry name" value="Cyclin_C-dom"/>
</dbReference>
<dbReference type="InterPro" id="IPR006671">
    <property type="entry name" value="Cyclin_N"/>
</dbReference>
<dbReference type="InterPro" id="IPR048258">
    <property type="entry name" value="Cyclins_cyclin-box"/>
</dbReference>
<dbReference type="PANTHER" id="PTHR10177">
    <property type="entry name" value="CYCLINS"/>
    <property type="match status" value="1"/>
</dbReference>
<dbReference type="Pfam" id="PF02984">
    <property type="entry name" value="Cyclin_C"/>
    <property type="match status" value="1"/>
</dbReference>
<dbReference type="Pfam" id="PF00134">
    <property type="entry name" value="Cyclin_N"/>
    <property type="match status" value="1"/>
</dbReference>
<dbReference type="PIRSF" id="PIRSF001771">
    <property type="entry name" value="Cyclin_A_B_D_E"/>
    <property type="match status" value="1"/>
</dbReference>
<dbReference type="SMART" id="SM00385">
    <property type="entry name" value="CYCLIN"/>
    <property type="match status" value="2"/>
</dbReference>
<dbReference type="SMART" id="SM01332">
    <property type="entry name" value="Cyclin_C"/>
    <property type="match status" value="1"/>
</dbReference>
<dbReference type="SUPFAM" id="SSF47954">
    <property type="entry name" value="Cyclin-like"/>
    <property type="match status" value="2"/>
</dbReference>
<dbReference type="PROSITE" id="PS00292">
    <property type="entry name" value="CYCLINS"/>
    <property type="match status" value="1"/>
</dbReference>
<feature type="chain" id="PRO_0000080364" description="G2/mitotic-specific cyclin-B2">
    <location>
        <begin position="1"/>
        <end position="399"/>
    </location>
</feature>
<feature type="region of interest" description="Disordered" evidence="1">
    <location>
        <begin position="58"/>
        <end position="78"/>
    </location>
</feature>
<accession>P29332</accession>
<reference key="1">
    <citation type="journal article" date="1992" name="J. Cell Biol.">
        <title>Cyclin B2 undergoes cell cycle-dependent nuclear translocation and, when expressed as a non-destructible mutant, causes mitotic arrest in HeLa cells.</title>
        <authorList>
            <person name="Gallant P."/>
            <person name="Nigg E.A."/>
        </authorList>
    </citation>
    <scope>NUCLEOTIDE SEQUENCE [MRNA]</scope>
</reference>
<name>CCNB2_CHICK</name>
<keyword id="KW-0131">Cell cycle</keyword>
<keyword id="KW-0132">Cell division</keyword>
<keyword id="KW-0195">Cyclin</keyword>
<keyword id="KW-0498">Mitosis</keyword>
<keyword id="KW-1185">Reference proteome</keyword>